<evidence type="ECO:0000255" key="1">
    <source>
        <dbReference type="HAMAP-Rule" id="MF_00362"/>
    </source>
</evidence>
<evidence type="ECO:0000305" key="2"/>
<reference key="1">
    <citation type="journal article" date="2009" name="PLoS Pathog.">
        <title>Molecular evolutionary consequences of niche restriction in Francisella tularensis, a facultative intracellular pathogen.</title>
        <authorList>
            <person name="Larsson P."/>
            <person name="Elfsmark D."/>
            <person name="Svensson K."/>
            <person name="Wikstroem P."/>
            <person name="Forsman M."/>
            <person name="Brettin T."/>
            <person name="Keim P."/>
            <person name="Johansson A."/>
        </authorList>
    </citation>
    <scope>NUCLEOTIDE SEQUENCE [LARGE SCALE GENOMIC DNA]</scope>
    <source>
        <strain>FSC147</strain>
    </source>
</reference>
<sequence length="172" mass="18693">MALRIEDKKAIVAEVAEQMSSALSAAVADYRGLTVNEMTSLRKQARESGVYLRVVRNNLARLAIKGTEFECLADALKGPLVLALSKDAPGAAAKLFKNFQKDHNAFEVKNLAMSGELFGPEKLDDFAKLPTREEALATLLNVMQAPVTKFVRTLNEIPSQAVRVFAAVGDSK</sequence>
<name>RL10_FRATM</name>
<protein>
    <recommendedName>
        <fullName evidence="1">Large ribosomal subunit protein uL10</fullName>
    </recommendedName>
    <alternativeName>
        <fullName evidence="2">50S ribosomal protein L10</fullName>
    </alternativeName>
</protein>
<comment type="function">
    <text evidence="1">Forms part of the ribosomal stalk, playing a central role in the interaction of the ribosome with GTP-bound translation factors.</text>
</comment>
<comment type="subunit">
    <text evidence="1">Part of the ribosomal stalk of the 50S ribosomal subunit. The N-terminus interacts with L11 and the large rRNA to form the base of the stalk. The C-terminus forms an elongated spine to which L12 dimers bind in a sequential fashion forming a multimeric L10(L12)X complex.</text>
</comment>
<comment type="similarity">
    <text evidence="1">Belongs to the universal ribosomal protein uL10 family.</text>
</comment>
<organism>
    <name type="scientific">Francisella tularensis subsp. mediasiatica (strain FSC147)</name>
    <dbReference type="NCBI Taxonomy" id="441952"/>
    <lineage>
        <taxon>Bacteria</taxon>
        <taxon>Pseudomonadati</taxon>
        <taxon>Pseudomonadota</taxon>
        <taxon>Gammaproteobacteria</taxon>
        <taxon>Thiotrichales</taxon>
        <taxon>Francisellaceae</taxon>
        <taxon>Francisella</taxon>
    </lineage>
</organism>
<keyword id="KW-0687">Ribonucleoprotein</keyword>
<keyword id="KW-0689">Ribosomal protein</keyword>
<keyword id="KW-0694">RNA-binding</keyword>
<keyword id="KW-0699">rRNA-binding</keyword>
<dbReference type="EMBL" id="CP000915">
    <property type="protein sequence ID" value="ACD30287.1"/>
    <property type="molecule type" value="Genomic_DNA"/>
</dbReference>
<dbReference type="SMR" id="B2SFD4"/>
<dbReference type="KEGG" id="ftm:FTM_0207"/>
<dbReference type="HOGENOM" id="CLU_092227_0_1_6"/>
<dbReference type="GO" id="GO:1990904">
    <property type="term" value="C:ribonucleoprotein complex"/>
    <property type="evidence" value="ECO:0007669"/>
    <property type="project" value="UniProtKB-KW"/>
</dbReference>
<dbReference type="GO" id="GO:0005840">
    <property type="term" value="C:ribosome"/>
    <property type="evidence" value="ECO:0007669"/>
    <property type="project" value="UniProtKB-KW"/>
</dbReference>
<dbReference type="GO" id="GO:0070180">
    <property type="term" value="F:large ribosomal subunit rRNA binding"/>
    <property type="evidence" value="ECO:0007669"/>
    <property type="project" value="UniProtKB-UniRule"/>
</dbReference>
<dbReference type="GO" id="GO:0006412">
    <property type="term" value="P:translation"/>
    <property type="evidence" value="ECO:0007669"/>
    <property type="project" value="UniProtKB-UniRule"/>
</dbReference>
<dbReference type="CDD" id="cd05797">
    <property type="entry name" value="Ribosomal_L10"/>
    <property type="match status" value="1"/>
</dbReference>
<dbReference type="Gene3D" id="3.30.70.1730">
    <property type="match status" value="1"/>
</dbReference>
<dbReference type="Gene3D" id="6.10.250.290">
    <property type="match status" value="1"/>
</dbReference>
<dbReference type="HAMAP" id="MF_00362">
    <property type="entry name" value="Ribosomal_uL10"/>
    <property type="match status" value="1"/>
</dbReference>
<dbReference type="InterPro" id="IPR001790">
    <property type="entry name" value="Ribosomal_uL10"/>
</dbReference>
<dbReference type="InterPro" id="IPR043141">
    <property type="entry name" value="Ribosomal_uL10-like_sf"/>
</dbReference>
<dbReference type="InterPro" id="IPR022973">
    <property type="entry name" value="Ribosomal_uL10_bac"/>
</dbReference>
<dbReference type="InterPro" id="IPR047865">
    <property type="entry name" value="Ribosomal_uL10_bac_type"/>
</dbReference>
<dbReference type="NCBIfam" id="NF000955">
    <property type="entry name" value="PRK00099.1-1"/>
    <property type="match status" value="1"/>
</dbReference>
<dbReference type="PANTHER" id="PTHR11560">
    <property type="entry name" value="39S RIBOSOMAL PROTEIN L10, MITOCHONDRIAL"/>
    <property type="match status" value="1"/>
</dbReference>
<dbReference type="Pfam" id="PF00466">
    <property type="entry name" value="Ribosomal_L10"/>
    <property type="match status" value="1"/>
</dbReference>
<dbReference type="SUPFAM" id="SSF160369">
    <property type="entry name" value="Ribosomal protein L10-like"/>
    <property type="match status" value="1"/>
</dbReference>
<accession>B2SFD4</accession>
<gene>
    <name evidence="1" type="primary">rplJ</name>
    <name type="ordered locus">FTM_0207</name>
</gene>
<feature type="chain" id="PRO_1000120967" description="Large ribosomal subunit protein uL10">
    <location>
        <begin position="1"/>
        <end position="172"/>
    </location>
</feature>
<proteinExistence type="inferred from homology"/>